<feature type="signal peptide" evidence="3">
    <location>
        <begin position="1"/>
        <end position="19"/>
    </location>
</feature>
<feature type="chain" id="PRO_5000851422" description="Toxin To5" evidence="8">
    <location>
        <begin position="20"/>
        <end position="81"/>
    </location>
</feature>
<feature type="domain" description="LCN-type CS-alpha/beta" evidence="2">
    <location>
        <begin position="21"/>
        <end position="82"/>
    </location>
</feature>
<feature type="modified residue" description="Cysteine amide" evidence="1">
    <location>
        <position position="81"/>
    </location>
</feature>
<feature type="disulfide bond" evidence="2">
    <location>
        <begin position="31"/>
        <end position="81"/>
    </location>
</feature>
<feature type="disulfide bond" evidence="2">
    <location>
        <begin position="35"/>
        <end position="57"/>
    </location>
</feature>
<feature type="disulfide bond" evidence="2">
    <location>
        <begin position="43"/>
        <end position="62"/>
    </location>
</feature>
<feature type="disulfide bond" evidence="2">
    <location>
        <begin position="47"/>
        <end position="64"/>
    </location>
</feature>
<feature type="sequence conflict" description="In Ref. 3; AA sequence." evidence="7" ref="3">
    <original>R</original>
    <variation>Y</variation>
    <location>
        <position position="21"/>
    </location>
</feature>
<name>SCX5_TITOB</name>
<reference key="1">
    <citation type="journal article" date="2012" name="PLoS ONE">
        <title>Identification and phylogenetic analysis of Tityus pachyurus and Tityus obscurus novel putative Na+-channel scorpion toxins.</title>
        <authorList>
            <person name="Guerrero-Vargas J.A."/>
            <person name="Mourao C.B."/>
            <person name="Quintero-Hernandez V."/>
            <person name="Possani L.D."/>
            <person name="Schwartz E.F."/>
        </authorList>
    </citation>
    <scope>NUCLEOTIDE SEQUENCE [MRNA]</scope>
    <scope>NOMENCLATURE</scope>
    <scope>MASS SPECTROMETRY</scope>
    <scope>SUBCELLULAR LOCATION</scope>
    <source>
        <tissue>Venom</tissue>
        <tissue>Venom gland</tissue>
    </source>
</reference>
<reference evidence="10" key="2">
    <citation type="journal article" date="2018" name="PLoS ONE">
        <title>Proteomic endorsed transcriptomic profiles of venom glands from Tityus obscurus and T. serrulatus scorpions.</title>
        <authorList>
            <person name="de Oliveira U.C."/>
            <person name="Nishiyama M.Y. Jr."/>
            <person name="Dos Santos M.B.V."/>
            <person name="Santos-da-Silva A.P."/>
            <person name="Chalkidis H.M."/>
            <person name="Souza-Imberg A."/>
            <person name="Candido D.M."/>
            <person name="Yamanouye N."/>
            <person name="Dorce V.A.C."/>
            <person name="Junqueira-de-Azevedo I.L.M."/>
        </authorList>
    </citation>
    <scope>NUCLEOTIDE SEQUENCE [MRNA]</scope>
    <source>
        <tissue>Telson</tissue>
    </source>
</reference>
<reference evidence="7" key="3">
    <citation type="journal article" date="2004" name="J. Chromatogr. B">
        <title>Proteomics of the venom from the Amazonian scorpion Tityus cambridgei and the role of prolines on mass spectrometry analysis of toxins.</title>
        <authorList>
            <person name="Batista C.V.F."/>
            <person name="del Pozo L."/>
            <person name="Zamudio F.Z."/>
            <person name="Contreras S."/>
            <person name="Becerril B."/>
            <person name="Wanke E."/>
            <person name="Possani L.D."/>
        </authorList>
    </citation>
    <scope>PROTEIN SEQUENCE OF 20-29</scope>
    <scope>SUBCELLULAR LOCATION</scope>
    <scope>TISSUE SPECIFICITY</scope>
    <scope>MASS SPECTROMETRY</scope>
    <source>
        <tissue evidence="3">Venom</tissue>
    </source>
</reference>
<keyword id="KW-0027">Amidation</keyword>
<keyword id="KW-0903">Direct protein sequencing</keyword>
<keyword id="KW-1015">Disulfide bond</keyword>
<keyword id="KW-0872">Ion channel impairing toxin</keyword>
<keyword id="KW-0528">Neurotoxin</keyword>
<keyword id="KW-0964">Secreted</keyword>
<keyword id="KW-0732">Signal</keyword>
<keyword id="KW-0800">Toxin</keyword>
<keyword id="KW-0738">Voltage-gated sodium channel impairing toxin</keyword>
<sequence>MKAIIFFIGCLMLIDLVAGSRSGYPVTQKGCVYSCFWGSNWWCNAECTALGGSSGYCAWPSCWCYSLPDNRNIWGSYPNNCGKK</sequence>
<comment type="function">
    <text evidence="1">Beta toxins bind voltage-independently at site-4 of sodium channels (Nav) and shift the voltage of activation toward more negative potentials thereby affecting sodium channel activation and promoting spontaneous and repetitive firing.</text>
</comment>
<comment type="subcellular location">
    <subcellularLocation>
        <location evidence="3 4">Secreted</location>
    </subcellularLocation>
</comment>
<comment type="tissue specificity">
    <text evidence="8 9">Expressed by the venom gland.</text>
</comment>
<comment type="domain">
    <text evidence="7">Has the structural arrangement of an alpha-helix connected to antiparallel beta-sheets by disulfide bonds (CS-alpha/beta).</text>
</comment>
<comment type="mass spectrometry"/>
<comment type="mass spectrometry"/>
<comment type="similarity">
    <text evidence="7">Belongs to the long (4 C-C) scorpion toxin superfamily. Sodium channel inhibitor family. Beta subfamily.</text>
</comment>
<accession>P84693</accession>
<accession>A0A1E1WVU6</accession>
<accession>H1ZZH4</accession>
<evidence type="ECO:0000250" key="1"/>
<evidence type="ECO:0000255" key="2">
    <source>
        <dbReference type="PROSITE-ProRule" id="PRU01210"/>
    </source>
</evidence>
<evidence type="ECO:0000269" key="3">
    <source>
    </source>
</evidence>
<evidence type="ECO:0000269" key="4">
    <source>
    </source>
</evidence>
<evidence type="ECO:0000303" key="5">
    <source>
    </source>
</evidence>
<evidence type="ECO:0000303" key="6">
    <source>
    </source>
</evidence>
<evidence type="ECO:0000305" key="7"/>
<evidence type="ECO:0000305" key="8">
    <source>
    </source>
</evidence>
<evidence type="ECO:0000305" key="9">
    <source>
    </source>
</evidence>
<evidence type="ECO:0000312" key="10">
    <source>
        <dbReference type="EMBL" id="JAT91094.1"/>
    </source>
</evidence>
<dbReference type="EMBL" id="HE585228">
    <property type="protein sequence ID" value="CCD31422.1"/>
    <property type="molecule type" value="mRNA"/>
</dbReference>
<dbReference type="EMBL" id="GEMQ01000095">
    <property type="protein sequence ID" value="JAT91094.1"/>
    <property type="molecule type" value="Transcribed_RNA"/>
</dbReference>
<dbReference type="SMR" id="P84693"/>
<dbReference type="GO" id="GO:0005576">
    <property type="term" value="C:extracellular region"/>
    <property type="evidence" value="ECO:0007005"/>
    <property type="project" value="UniProtKB"/>
</dbReference>
<dbReference type="GO" id="GO:0019871">
    <property type="term" value="F:sodium channel inhibitor activity"/>
    <property type="evidence" value="ECO:0007669"/>
    <property type="project" value="InterPro"/>
</dbReference>
<dbReference type="GO" id="GO:0090729">
    <property type="term" value="F:toxin activity"/>
    <property type="evidence" value="ECO:0007669"/>
    <property type="project" value="UniProtKB-KW"/>
</dbReference>
<dbReference type="GO" id="GO:0006952">
    <property type="term" value="P:defense response"/>
    <property type="evidence" value="ECO:0007669"/>
    <property type="project" value="InterPro"/>
</dbReference>
<dbReference type="CDD" id="cd23106">
    <property type="entry name" value="neurotoxins_LC_scorpion"/>
    <property type="match status" value="1"/>
</dbReference>
<dbReference type="FunFam" id="3.30.30.10:FF:000002">
    <property type="entry name" value="Alpha-like toxin BmK-M1"/>
    <property type="match status" value="1"/>
</dbReference>
<dbReference type="Gene3D" id="3.30.30.10">
    <property type="entry name" value="Knottin, scorpion toxin-like"/>
    <property type="match status" value="1"/>
</dbReference>
<dbReference type="InterPro" id="IPR044062">
    <property type="entry name" value="LCN-type_CS_alpha_beta_dom"/>
</dbReference>
<dbReference type="InterPro" id="IPR003614">
    <property type="entry name" value="Scorpion_toxin-like"/>
</dbReference>
<dbReference type="InterPro" id="IPR036574">
    <property type="entry name" value="Scorpion_toxin-like_sf"/>
</dbReference>
<dbReference type="InterPro" id="IPR018218">
    <property type="entry name" value="Scorpion_toxinL"/>
</dbReference>
<dbReference type="InterPro" id="IPR002061">
    <property type="entry name" value="Scorpion_toxinL/defensin"/>
</dbReference>
<dbReference type="Pfam" id="PF00537">
    <property type="entry name" value="Toxin_3"/>
    <property type="match status" value="1"/>
</dbReference>
<dbReference type="PRINTS" id="PR00285">
    <property type="entry name" value="SCORPNTOXIN"/>
</dbReference>
<dbReference type="SMART" id="SM00505">
    <property type="entry name" value="Knot1"/>
    <property type="match status" value="1"/>
</dbReference>
<dbReference type="SUPFAM" id="SSF57095">
    <property type="entry name" value="Scorpion toxin-like"/>
    <property type="match status" value="1"/>
</dbReference>
<dbReference type="PROSITE" id="PS51863">
    <property type="entry name" value="LCN_CSAB"/>
    <property type="match status" value="1"/>
</dbReference>
<proteinExistence type="evidence at protein level"/>
<protein>
    <recommendedName>
        <fullName evidence="6">Toxin To5</fullName>
    </recommendedName>
    <alternativeName>
        <fullName>PT-Arthr*-beta* NaTx2.7</fullName>
    </alternativeName>
    <alternativeName>
        <fullName evidence="5">Toxin Tc66</fullName>
    </alternativeName>
    <alternativeName>
        <fullName evidence="7">Toxin To66</fullName>
    </alternativeName>
</protein>
<organism>
    <name type="scientific">Tityus obscurus</name>
    <name type="common">Amazonian scorpion</name>
    <name type="synonym">Tityus cambridgei</name>
    <dbReference type="NCBI Taxonomy" id="1221240"/>
    <lineage>
        <taxon>Eukaryota</taxon>
        <taxon>Metazoa</taxon>
        <taxon>Ecdysozoa</taxon>
        <taxon>Arthropoda</taxon>
        <taxon>Chelicerata</taxon>
        <taxon>Arachnida</taxon>
        <taxon>Scorpiones</taxon>
        <taxon>Buthida</taxon>
        <taxon>Buthoidea</taxon>
        <taxon>Buthidae</taxon>
        <taxon>Tityus</taxon>
    </lineage>
</organism>